<accession>Q3J3P6</accession>
<sequence length="338" mass="34305">MKAPFTSLAGFRAVFETLPQVDAEAVEAATARNETLTKPKGALGRLEELAIWYAGWIGDGRPALERPQVAIFAGNHGIAARGVSAFPPEVTVQMVANYRAGGAAVNQLCHVAGASMTVTELELDRPTLDFTVSPAMTEDELVAALAAGWEAVDDESDLLVVGEMGIGNTTAAAAIAAALFGGTAAEWTGRGSGVAGSALEAKTRVVAEGLERHADALSDPLEVLRCLGGREIAAMAGAIARARVGRTPVILDGFICTSAAAVLHALTPSALDHAIAGHVSAEGAHPAALARIGKEPLLDLGMRLGEGTGAIVAINILRSAVACLSGMATFAEAGVSGG</sequence>
<feature type="chain" id="PRO_1000058768" description="Nicotinate-nucleotide--dimethylbenzimidazole phosphoribosyltransferase">
    <location>
        <begin position="1"/>
        <end position="338"/>
    </location>
</feature>
<feature type="active site" description="Proton acceptor" evidence="1">
    <location>
        <position position="306"/>
    </location>
</feature>
<comment type="function">
    <text evidence="1">Catalyzes the synthesis of alpha-ribazole-5'-phosphate from nicotinate mononucleotide (NAMN) and 5,6-dimethylbenzimidazole (DMB).</text>
</comment>
<comment type="catalytic activity">
    <reaction evidence="1">
        <text>5,6-dimethylbenzimidazole + nicotinate beta-D-ribonucleotide = alpha-ribazole 5'-phosphate + nicotinate + H(+)</text>
        <dbReference type="Rhea" id="RHEA:11196"/>
        <dbReference type="ChEBI" id="CHEBI:15378"/>
        <dbReference type="ChEBI" id="CHEBI:15890"/>
        <dbReference type="ChEBI" id="CHEBI:32544"/>
        <dbReference type="ChEBI" id="CHEBI:57502"/>
        <dbReference type="ChEBI" id="CHEBI:57918"/>
        <dbReference type="EC" id="2.4.2.21"/>
    </reaction>
</comment>
<comment type="pathway">
    <text evidence="1">Nucleoside biosynthesis; alpha-ribazole biosynthesis; alpha-ribazole from 5,6-dimethylbenzimidazole: step 1/2.</text>
</comment>
<comment type="similarity">
    <text evidence="1">Belongs to the CobT family.</text>
</comment>
<organism>
    <name type="scientific">Cereibacter sphaeroides (strain ATCC 17023 / DSM 158 / JCM 6121 / CCUG 31486 / LMG 2827 / NBRC 12203 / NCIMB 8253 / ATH 2.4.1.)</name>
    <name type="common">Rhodobacter sphaeroides</name>
    <dbReference type="NCBI Taxonomy" id="272943"/>
    <lineage>
        <taxon>Bacteria</taxon>
        <taxon>Pseudomonadati</taxon>
        <taxon>Pseudomonadota</taxon>
        <taxon>Alphaproteobacteria</taxon>
        <taxon>Rhodobacterales</taxon>
        <taxon>Paracoccaceae</taxon>
        <taxon>Cereibacter</taxon>
    </lineage>
</organism>
<name>COBT_CERS4</name>
<keyword id="KW-0169">Cobalamin biosynthesis</keyword>
<keyword id="KW-0328">Glycosyltransferase</keyword>
<keyword id="KW-1185">Reference proteome</keyword>
<keyword id="KW-0808">Transferase</keyword>
<proteinExistence type="inferred from homology"/>
<protein>
    <recommendedName>
        <fullName evidence="1">Nicotinate-nucleotide--dimethylbenzimidazole phosphoribosyltransferase</fullName>
        <shortName evidence="1">NN:DBI PRT</shortName>
        <ecNumber evidence="1">2.4.2.21</ecNumber>
    </recommendedName>
    <alternativeName>
        <fullName evidence="1">N(1)-alpha-phosphoribosyltransferase</fullName>
    </alternativeName>
</protein>
<gene>
    <name evidence="1" type="primary">cobT</name>
    <name type="ordered locus">RHOS4_10200</name>
    <name type="ORF">RSP_2428</name>
</gene>
<reference key="1">
    <citation type="submission" date="2005-09" db="EMBL/GenBank/DDBJ databases">
        <title>Complete sequence of chromosome 1 of Rhodobacter sphaeroides 2.4.1.</title>
        <authorList>
            <person name="Copeland A."/>
            <person name="Lucas S."/>
            <person name="Lapidus A."/>
            <person name="Barry K."/>
            <person name="Detter J.C."/>
            <person name="Glavina T."/>
            <person name="Hammon N."/>
            <person name="Israni S."/>
            <person name="Pitluck S."/>
            <person name="Richardson P."/>
            <person name="Mackenzie C."/>
            <person name="Choudhary M."/>
            <person name="Larimer F."/>
            <person name="Hauser L.J."/>
            <person name="Land M."/>
            <person name="Donohue T.J."/>
            <person name="Kaplan S."/>
        </authorList>
    </citation>
    <scope>NUCLEOTIDE SEQUENCE [LARGE SCALE GENOMIC DNA]</scope>
    <source>
        <strain>ATCC 17023 / DSM 158 / JCM 6121 / CCUG 31486 / LMG 2827 / NBRC 12203 / NCIMB 8253 / ATH 2.4.1.</strain>
    </source>
</reference>
<evidence type="ECO:0000255" key="1">
    <source>
        <dbReference type="HAMAP-Rule" id="MF_00230"/>
    </source>
</evidence>
<dbReference type="EC" id="2.4.2.21" evidence="1"/>
<dbReference type="EMBL" id="CP000143">
    <property type="protein sequence ID" value="ABA78588.1"/>
    <property type="molecule type" value="Genomic_DNA"/>
</dbReference>
<dbReference type="RefSeq" id="WP_011337481.1">
    <property type="nucleotide sequence ID" value="NC_007493.2"/>
</dbReference>
<dbReference type="RefSeq" id="YP_352489.1">
    <property type="nucleotide sequence ID" value="NC_007493.2"/>
</dbReference>
<dbReference type="SMR" id="Q3J3P6"/>
<dbReference type="STRING" id="272943.RSP_2428"/>
<dbReference type="EnsemblBacteria" id="ABA78588">
    <property type="protein sequence ID" value="ABA78588"/>
    <property type="gene ID" value="RSP_2428"/>
</dbReference>
<dbReference type="GeneID" id="3720024"/>
<dbReference type="KEGG" id="rsp:RSP_2428"/>
<dbReference type="PATRIC" id="fig|272943.9.peg.1347"/>
<dbReference type="eggNOG" id="COG2038">
    <property type="taxonomic scope" value="Bacteria"/>
</dbReference>
<dbReference type="OrthoDB" id="9781491at2"/>
<dbReference type="PhylomeDB" id="Q3J3P6"/>
<dbReference type="UniPathway" id="UPA00061">
    <property type="reaction ID" value="UER00516"/>
</dbReference>
<dbReference type="Proteomes" id="UP000002703">
    <property type="component" value="Chromosome 1"/>
</dbReference>
<dbReference type="GO" id="GO:0008939">
    <property type="term" value="F:nicotinate-nucleotide-dimethylbenzimidazole phosphoribosyltransferase activity"/>
    <property type="evidence" value="ECO:0007669"/>
    <property type="project" value="UniProtKB-UniRule"/>
</dbReference>
<dbReference type="GO" id="GO:0009236">
    <property type="term" value="P:cobalamin biosynthetic process"/>
    <property type="evidence" value="ECO:0007669"/>
    <property type="project" value="UniProtKB-KW"/>
</dbReference>
<dbReference type="CDD" id="cd02439">
    <property type="entry name" value="DMB-PRT_CobT"/>
    <property type="match status" value="1"/>
</dbReference>
<dbReference type="Gene3D" id="1.10.1610.10">
    <property type="match status" value="1"/>
</dbReference>
<dbReference type="Gene3D" id="3.40.50.10210">
    <property type="match status" value="1"/>
</dbReference>
<dbReference type="HAMAP" id="MF_00230">
    <property type="entry name" value="CobT"/>
    <property type="match status" value="1"/>
</dbReference>
<dbReference type="InterPro" id="IPR003200">
    <property type="entry name" value="Nict_dMeBzImd_PRibTrfase"/>
</dbReference>
<dbReference type="InterPro" id="IPR017846">
    <property type="entry name" value="Nict_dMeBzImd_PRibTrfase_bact"/>
</dbReference>
<dbReference type="InterPro" id="IPR023195">
    <property type="entry name" value="Nict_dMeBzImd_PRibTrfase_N"/>
</dbReference>
<dbReference type="InterPro" id="IPR036087">
    <property type="entry name" value="Nict_dMeBzImd_PRibTrfase_sf"/>
</dbReference>
<dbReference type="NCBIfam" id="TIGR03160">
    <property type="entry name" value="cobT_DBIPRT"/>
    <property type="match status" value="1"/>
</dbReference>
<dbReference type="NCBIfam" id="NF000996">
    <property type="entry name" value="PRK00105.1"/>
    <property type="match status" value="1"/>
</dbReference>
<dbReference type="PANTHER" id="PTHR43463">
    <property type="entry name" value="NICOTINATE-NUCLEOTIDE--DIMETHYLBENZIMIDAZOLE PHOSPHORIBOSYLTRANSFERASE"/>
    <property type="match status" value="1"/>
</dbReference>
<dbReference type="PANTHER" id="PTHR43463:SF1">
    <property type="entry name" value="NICOTINATE-NUCLEOTIDE--DIMETHYLBENZIMIDAZOLE PHOSPHORIBOSYLTRANSFERASE"/>
    <property type="match status" value="1"/>
</dbReference>
<dbReference type="Pfam" id="PF02277">
    <property type="entry name" value="DBI_PRT"/>
    <property type="match status" value="1"/>
</dbReference>
<dbReference type="SUPFAM" id="SSF52733">
    <property type="entry name" value="Nicotinate mononucleotide:5,6-dimethylbenzimidazole phosphoribosyltransferase (CobT)"/>
    <property type="match status" value="1"/>
</dbReference>